<feature type="chain" id="PRO_0000103195" description="Uncharacterized DapA-like lyase VNG_0444G">
    <location>
        <begin position="1"/>
        <end position="304"/>
    </location>
</feature>
<feature type="active site" description="Charge relay system" evidence="1">
    <location>
        <position position="58"/>
    </location>
</feature>
<feature type="active site" description="Charge relay system" evidence="1">
    <location>
        <position position="121"/>
    </location>
</feature>
<feature type="active site" description="Proton donor" evidence="1">
    <location>
        <position position="147"/>
    </location>
</feature>
<feature type="active site" description="Schiff-base intermediate with substrate" evidence="1">
    <location>
        <position position="175"/>
    </location>
</feature>
<sequence length="304" mass="31397">MPTHAPAPGSGDPLGLHGVVPPVVTAFDADESLDADTTADHARMVVDAGVHGVFPLGTNGEFPLLTPSERDRVVTAVVDEVGGEVPVIAGVGAPSTRQTVAHAEHAASVGADGVVVVTPFYYPLDGTAAVEHYRRVAAAVDCPVYVYHIPSKTGNELSLETLAALAEIDTLAGVKDSSKDVPWLGQAVDAHPELTFLAGSDSLLAPGLDVGCAGLVSAVANVAPELVVGLYEAYDEGDRERARARQSTVYEVRAALKRGPYMAGVKAALGLRGFDAGPLRSPLRGLDDDDRAALEADLADLGLL</sequence>
<comment type="subunit">
    <text evidence="1">Homotetramer.</text>
</comment>
<comment type="subcellular location">
    <subcellularLocation>
        <location evidence="2">Cytoplasm</location>
    </subcellularLocation>
</comment>
<comment type="similarity">
    <text evidence="2">Belongs to the DapA family.</text>
</comment>
<organism>
    <name type="scientific">Halobacterium salinarum (strain ATCC 700922 / JCM 11081 / NRC-1)</name>
    <name type="common">Halobacterium halobium</name>
    <dbReference type="NCBI Taxonomy" id="64091"/>
    <lineage>
        <taxon>Archaea</taxon>
        <taxon>Methanobacteriati</taxon>
        <taxon>Methanobacteriota</taxon>
        <taxon>Stenosarchaea group</taxon>
        <taxon>Halobacteria</taxon>
        <taxon>Halobacteriales</taxon>
        <taxon>Halobacteriaceae</taxon>
        <taxon>Halobacterium</taxon>
        <taxon>Halobacterium salinarum NRC-34001</taxon>
    </lineage>
</organism>
<reference key="1">
    <citation type="journal article" date="2000" name="Proc. Natl. Acad. Sci. U.S.A.">
        <title>Genome sequence of Halobacterium species NRC-1.</title>
        <authorList>
            <person name="Ng W.V."/>
            <person name="Kennedy S.P."/>
            <person name="Mahairas G.G."/>
            <person name="Berquist B."/>
            <person name="Pan M."/>
            <person name="Shukla H.D."/>
            <person name="Lasky S.R."/>
            <person name="Baliga N.S."/>
            <person name="Thorsson V."/>
            <person name="Sbrogna J."/>
            <person name="Swartzell S."/>
            <person name="Weir D."/>
            <person name="Hall J."/>
            <person name="Dahl T.A."/>
            <person name="Welti R."/>
            <person name="Goo Y.A."/>
            <person name="Leithauser B."/>
            <person name="Keller K."/>
            <person name="Cruz R."/>
            <person name="Danson M.J."/>
            <person name="Hough D.W."/>
            <person name="Maddocks D.G."/>
            <person name="Jablonski P.E."/>
            <person name="Krebs M.P."/>
            <person name="Angevine C.M."/>
            <person name="Dale H."/>
            <person name="Isenbarger T.A."/>
            <person name="Peck R.F."/>
            <person name="Pohlschroder M."/>
            <person name="Spudich J.L."/>
            <person name="Jung K.-H."/>
            <person name="Alam M."/>
            <person name="Freitas T."/>
            <person name="Hou S."/>
            <person name="Daniels C.J."/>
            <person name="Dennis P.P."/>
            <person name="Omer A.D."/>
            <person name="Ebhardt H."/>
            <person name="Lowe T.M."/>
            <person name="Liang P."/>
            <person name="Riley M."/>
            <person name="Hood L."/>
            <person name="DasSarma S."/>
        </authorList>
    </citation>
    <scope>NUCLEOTIDE SEQUENCE [LARGE SCALE GENOMIC DNA]</scope>
    <source>
        <strain>ATCC 700922 / JCM 11081 / NRC-1</strain>
    </source>
</reference>
<gene>
    <name type="primary">dapAL</name>
    <name type="ordered locus">VNG_0444G</name>
</gene>
<proteinExistence type="inferred from homology"/>
<keyword id="KW-0963">Cytoplasm</keyword>
<keyword id="KW-0456">Lyase</keyword>
<keyword id="KW-1185">Reference proteome</keyword>
<keyword id="KW-0704">Schiff base</keyword>
<accession>Q9HS19</accession>
<dbReference type="EC" id="4.-.-.-"/>
<dbReference type="EMBL" id="AE004437">
    <property type="protein sequence ID" value="AAG18989.1"/>
    <property type="molecule type" value="Genomic_DNA"/>
</dbReference>
<dbReference type="PIR" id="A84203">
    <property type="entry name" value="A84203"/>
</dbReference>
<dbReference type="RefSeq" id="WP_012289156.1">
    <property type="nucleotide sequence ID" value="NC_002607.1"/>
</dbReference>
<dbReference type="SMR" id="Q9HS19"/>
<dbReference type="FunCoup" id="Q9HS19">
    <property type="interactions" value="90"/>
</dbReference>
<dbReference type="STRING" id="64091.VNG_0444G"/>
<dbReference type="PaxDb" id="64091-VNG_0444G"/>
<dbReference type="KEGG" id="hal:VNG_0444G"/>
<dbReference type="PATRIC" id="fig|64091.14.peg.333"/>
<dbReference type="HOGENOM" id="CLU_049343_5_1_2"/>
<dbReference type="InParanoid" id="Q9HS19"/>
<dbReference type="OrthoDB" id="350860at2157"/>
<dbReference type="PhylomeDB" id="Q9HS19"/>
<dbReference type="Proteomes" id="UP000000554">
    <property type="component" value="Chromosome"/>
</dbReference>
<dbReference type="GO" id="GO:0005737">
    <property type="term" value="C:cytoplasm"/>
    <property type="evidence" value="ECO:0007669"/>
    <property type="project" value="UniProtKB-SubCell"/>
</dbReference>
<dbReference type="GO" id="GO:0008675">
    <property type="term" value="F:2-dehydro-3-deoxy-phosphogluconate aldolase activity"/>
    <property type="evidence" value="ECO:0007669"/>
    <property type="project" value="UniProtKB-ARBA"/>
</dbReference>
<dbReference type="GO" id="GO:0008840">
    <property type="term" value="F:4-hydroxy-tetrahydrodipicolinate synthase activity"/>
    <property type="evidence" value="ECO:0000318"/>
    <property type="project" value="GO_Central"/>
</dbReference>
<dbReference type="GO" id="GO:0044281">
    <property type="term" value="P:small molecule metabolic process"/>
    <property type="evidence" value="ECO:0007669"/>
    <property type="project" value="UniProtKB-ARBA"/>
</dbReference>
<dbReference type="CDD" id="cd00408">
    <property type="entry name" value="DHDPS-like"/>
    <property type="match status" value="1"/>
</dbReference>
<dbReference type="Gene3D" id="3.20.20.70">
    <property type="entry name" value="Aldolase class I"/>
    <property type="match status" value="1"/>
</dbReference>
<dbReference type="InterPro" id="IPR013785">
    <property type="entry name" value="Aldolase_TIM"/>
</dbReference>
<dbReference type="InterPro" id="IPR002220">
    <property type="entry name" value="DapA-like"/>
</dbReference>
<dbReference type="InterPro" id="IPR020625">
    <property type="entry name" value="Schiff_base-form_aldolases_AS"/>
</dbReference>
<dbReference type="PANTHER" id="PTHR12128:SF66">
    <property type="entry name" value="4-HYDROXY-2-OXOGLUTARATE ALDOLASE, MITOCHONDRIAL"/>
    <property type="match status" value="1"/>
</dbReference>
<dbReference type="PANTHER" id="PTHR12128">
    <property type="entry name" value="DIHYDRODIPICOLINATE SYNTHASE"/>
    <property type="match status" value="1"/>
</dbReference>
<dbReference type="Pfam" id="PF00701">
    <property type="entry name" value="DHDPS"/>
    <property type="match status" value="1"/>
</dbReference>
<dbReference type="PIRSF" id="PIRSF001365">
    <property type="entry name" value="DHDPS"/>
    <property type="match status" value="1"/>
</dbReference>
<dbReference type="PRINTS" id="PR00146">
    <property type="entry name" value="DHPICSNTHASE"/>
</dbReference>
<dbReference type="SMART" id="SM01130">
    <property type="entry name" value="DHDPS"/>
    <property type="match status" value="1"/>
</dbReference>
<dbReference type="SUPFAM" id="SSF51569">
    <property type="entry name" value="Aldolase"/>
    <property type="match status" value="1"/>
</dbReference>
<dbReference type="PROSITE" id="PS00666">
    <property type="entry name" value="DHDPS_2"/>
    <property type="match status" value="1"/>
</dbReference>
<protein>
    <recommendedName>
        <fullName>Uncharacterized DapA-like lyase VNG_0444G</fullName>
        <ecNumber>4.-.-.-</ecNumber>
    </recommendedName>
</protein>
<name>DAPAL_HALSA</name>
<evidence type="ECO:0000250" key="1"/>
<evidence type="ECO:0000305" key="2"/>